<organism>
    <name type="scientific">Haemophilus ducreyi (strain 35000HP / ATCC 700724)</name>
    <dbReference type="NCBI Taxonomy" id="233412"/>
    <lineage>
        <taxon>Bacteria</taxon>
        <taxon>Pseudomonadati</taxon>
        <taxon>Pseudomonadota</taxon>
        <taxon>Gammaproteobacteria</taxon>
        <taxon>Pasteurellales</taxon>
        <taxon>Pasteurellaceae</taxon>
        <taxon>Haemophilus</taxon>
    </lineage>
</organism>
<dbReference type="EC" id="1.15.1.1"/>
<dbReference type="EMBL" id="X98737">
    <property type="protein sequence ID" value="CAA67289.1"/>
    <property type="molecule type" value="Genomic_DNA"/>
</dbReference>
<dbReference type="EMBL" id="U47664">
    <property type="protein sequence ID" value="AAB41293.1"/>
    <property type="molecule type" value="Genomic_DNA"/>
</dbReference>
<dbReference type="EMBL" id="AE017143">
    <property type="protein sequence ID" value="AAP95739.1"/>
    <property type="molecule type" value="Genomic_DNA"/>
</dbReference>
<dbReference type="EMBL" id="X83125">
    <property type="protein sequence ID" value="CAA58206.1"/>
    <property type="molecule type" value="Genomic_DNA"/>
</dbReference>
<dbReference type="PIR" id="JC5718">
    <property type="entry name" value="JC5718"/>
</dbReference>
<dbReference type="RefSeq" id="WP_010944789.1">
    <property type="nucleotide sequence ID" value="NC_002940.2"/>
</dbReference>
<dbReference type="PDB" id="1Z9N">
    <property type="method" value="X-ray"/>
    <property type="resolution" value="1.50 A"/>
    <property type="chains" value="A/B/C/D=23-199"/>
</dbReference>
<dbReference type="PDB" id="1Z9P">
    <property type="method" value="X-ray"/>
    <property type="resolution" value="1.50 A"/>
    <property type="chains" value="A/B=45-199"/>
</dbReference>
<dbReference type="PDBsum" id="1Z9N"/>
<dbReference type="PDBsum" id="1Z9P"/>
<dbReference type="SMR" id="Q59452"/>
<dbReference type="STRING" id="233412.HD_0848"/>
<dbReference type="KEGG" id="hdu:HD_0848"/>
<dbReference type="eggNOG" id="COG2032">
    <property type="taxonomic scope" value="Bacteria"/>
</dbReference>
<dbReference type="HOGENOM" id="CLU_056632_7_1_6"/>
<dbReference type="OrthoDB" id="5431326at2"/>
<dbReference type="EvolutionaryTrace" id="Q59452"/>
<dbReference type="Proteomes" id="UP000001022">
    <property type="component" value="Chromosome"/>
</dbReference>
<dbReference type="GO" id="GO:0042597">
    <property type="term" value="C:periplasmic space"/>
    <property type="evidence" value="ECO:0007669"/>
    <property type="project" value="UniProtKB-SubCell"/>
</dbReference>
<dbReference type="GO" id="GO:0005507">
    <property type="term" value="F:copper ion binding"/>
    <property type="evidence" value="ECO:0007669"/>
    <property type="project" value="InterPro"/>
</dbReference>
<dbReference type="GO" id="GO:0004784">
    <property type="term" value="F:superoxide dismutase activity"/>
    <property type="evidence" value="ECO:0007669"/>
    <property type="project" value="UniProtKB-EC"/>
</dbReference>
<dbReference type="CDD" id="cd00305">
    <property type="entry name" value="Cu-Zn_Superoxide_Dismutase"/>
    <property type="match status" value="1"/>
</dbReference>
<dbReference type="FunFam" id="2.60.40.200:FF:000002">
    <property type="entry name" value="Superoxide dismutase [Cu-Zn]"/>
    <property type="match status" value="1"/>
</dbReference>
<dbReference type="Gene3D" id="2.60.40.200">
    <property type="entry name" value="Superoxide dismutase, copper/zinc binding domain"/>
    <property type="match status" value="1"/>
</dbReference>
<dbReference type="InterPro" id="IPR036423">
    <property type="entry name" value="SOD-like_Cu/Zn_dom_sf"/>
</dbReference>
<dbReference type="InterPro" id="IPR024134">
    <property type="entry name" value="SOD_Cu/Zn_/chaperone"/>
</dbReference>
<dbReference type="InterPro" id="IPR018152">
    <property type="entry name" value="SOD_Cu/Zn_BS"/>
</dbReference>
<dbReference type="InterPro" id="IPR001424">
    <property type="entry name" value="SOD_Cu_Zn_dom"/>
</dbReference>
<dbReference type="NCBIfam" id="NF007628">
    <property type="entry name" value="PRK10290.1"/>
    <property type="match status" value="1"/>
</dbReference>
<dbReference type="PANTHER" id="PTHR10003">
    <property type="entry name" value="SUPEROXIDE DISMUTASE CU-ZN -RELATED"/>
    <property type="match status" value="1"/>
</dbReference>
<dbReference type="Pfam" id="PF00080">
    <property type="entry name" value="Sod_Cu"/>
    <property type="match status" value="1"/>
</dbReference>
<dbReference type="SUPFAM" id="SSF49329">
    <property type="entry name" value="Cu,Zn superoxide dismutase-like"/>
    <property type="match status" value="1"/>
</dbReference>
<dbReference type="PROSITE" id="PS00087">
    <property type="entry name" value="SOD_CU_ZN_1"/>
    <property type="match status" value="1"/>
</dbReference>
<dbReference type="PROSITE" id="PS00332">
    <property type="entry name" value="SOD_CU_ZN_2"/>
    <property type="match status" value="1"/>
</dbReference>
<name>SODC_HAEDU</name>
<feature type="signal peptide" evidence="2">
    <location>
        <begin position="1"/>
        <end position="22"/>
    </location>
</feature>
<feature type="chain" id="PRO_0000032828" description="Superoxide dismutase [Cu-Zn]">
    <location>
        <begin position="23"/>
        <end position="199"/>
    </location>
</feature>
<feature type="binding site" evidence="1">
    <location>
        <position position="92"/>
    </location>
    <ligand>
        <name>Cu cation</name>
        <dbReference type="ChEBI" id="CHEBI:23378"/>
        <note>catalytic</note>
    </ligand>
</feature>
<feature type="binding site" evidence="1">
    <location>
        <position position="94"/>
    </location>
    <ligand>
        <name>Cu cation</name>
        <dbReference type="ChEBI" id="CHEBI:23378"/>
        <note>catalytic</note>
    </ligand>
</feature>
<feature type="binding site" evidence="1">
    <location>
        <position position="117"/>
    </location>
    <ligand>
        <name>Cu cation</name>
        <dbReference type="ChEBI" id="CHEBI:23378"/>
        <note>catalytic</note>
    </ligand>
</feature>
<feature type="binding site" evidence="1">
    <location>
        <position position="117"/>
    </location>
    <ligand>
        <name>Zn(2+)</name>
        <dbReference type="ChEBI" id="CHEBI:29105"/>
        <note>structural</note>
    </ligand>
</feature>
<feature type="binding site" evidence="1">
    <location>
        <position position="126"/>
    </location>
    <ligand>
        <name>Zn(2+)</name>
        <dbReference type="ChEBI" id="CHEBI:29105"/>
        <note>structural</note>
    </ligand>
</feature>
<feature type="binding site" evidence="1">
    <location>
        <position position="135"/>
    </location>
    <ligand>
        <name>Zn(2+)</name>
        <dbReference type="ChEBI" id="CHEBI:29105"/>
        <note>structural</note>
    </ligand>
</feature>
<feature type="binding site" evidence="1">
    <location>
        <position position="138"/>
    </location>
    <ligand>
        <name>Zn(2+)</name>
        <dbReference type="ChEBI" id="CHEBI:29105"/>
        <note>structural</note>
    </ligand>
</feature>
<feature type="binding site" evidence="1">
    <location>
        <position position="173"/>
    </location>
    <ligand>
        <name>Cu cation</name>
        <dbReference type="ChEBI" id="CHEBI:23378"/>
        <note>catalytic</note>
    </ligand>
</feature>
<feature type="disulfide bond" evidence="1">
    <location>
        <begin position="99"/>
        <end position="195"/>
    </location>
</feature>
<feature type="strand" evidence="4">
    <location>
        <begin position="47"/>
        <end position="53"/>
    </location>
</feature>
<feature type="turn" evidence="4">
    <location>
        <begin position="56"/>
        <end position="58"/>
    </location>
</feature>
<feature type="strand" evidence="4">
    <location>
        <begin position="61"/>
        <end position="71"/>
    </location>
</feature>
<feature type="strand" evidence="4">
    <location>
        <begin position="74"/>
        <end position="81"/>
    </location>
</feature>
<feature type="strand" evidence="4">
    <location>
        <begin position="86"/>
        <end position="89"/>
    </location>
</feature>
<feature type="strand" evidence="4">
    <location>
        <begin position="91"/>
        <end position="97"/>
    </location>
</feature>
<feature type="strand" evidence="5">
    <location>
        <begin position="102"/>
        <end position="104"/>
    </location>
</feature>
<feature type="strand" evidence="4">
    <location>
        <begin position="105"/>
        <end position="109"/>
    </location>
</feature>
<feature type="helix" evidence="4">
    <location>
        <begin position="112"/>
        <end position="114"/>
    </location>
</feature>
<feature type="strand" evidence="4">
    <location>
        <begin position="142"/>
        <end position="144"/>
    </location>
</feature>
<feature type="strand" evidence="4">
    <location>
        <begin position="154"/>
        <end position="156"/>
    </location>
</feature>
<feature type="helix" evidence="4">
    <location>
        <begin position="162"/>
        <end position="165"/>
    </location>
</feature>
<feature type="strand" evidence="4">
    <location>
        <begin position="168"/>
        <end position="175"/>
    </location>
</feature>
<feature type="strand" evidence="4">
    <location>
        <begin position="179"/>
        <end position="184"/>
    </location>
</feature>
<feature type="helix" evidence="4">
    <location>
        <begin position="185"/>
        <end position="188"/>
    </location>
</feature>
<feature type="strand" evidence="4">
    <location>
        <begin position="191"/>
        <end position="198"/>
    </location>
</feature>
<reference key="1">
    <citation type="journal article" date="1997" name="FEMS Immunol. Med. Microbiol.">
        <title>Distribution, cloning, characterisation and mutagenesis of sodC, the gene encoding copper/zinc superoxide dismutase, a potential determinant of virulence, in Haemophilus ducreyi.</title>
        <authorList>
            <person name="Langford P.R."/>
            <person name="Kroll J.S."/>
        </authorList>
    </citation>
    <scope>NUCLEOTIDE SEQUENCE [GENOMIC DNA]</scope>
    <source>
        <strain>35000HP / ATCC 700724</strain>
    </source>
</reference>
<reference key="2">
    <citation type="journal article" date="1996" name="Gene">
        <title>Cloning and sequencing of the gene encoding the Cu,Zn-superoxide dismutase of Haemophilus ducreyi.</title>
        <authorList>
            <person name="Stevens M.K."/>
            <person name="Hassett D.J."/>
            <person name="Radolf J.D."/>
            <person name="Hansen E.J."/>
        </authorList>
    </citation>
    <scope>NUCLEOTIDE SEQUENCE [GENOMIC DNA]</scope>
    <source>
        <strain>35000HP / ATCC 700724</strain>
    </source>
</reference>
<reference key="3">
    <citation type="submission" date="2003-06" db="EMBL/GenBank/DDBJ databases">
        <title>The complete genome sequence of Haemophilus ducreyi.</title>
        <authorList>
            <person name="Munson R.S. Jr."/>
            <person name="Ray W.C."/>
            <person name="Mahairas G."/>
            <person name="Sabo P."/>
            <person name="Mungur R."/>
            <person name="Johnson L."/>
            <person name="Nguyen D."/>
            <person name="Wang J."/>
            <person name="Forst C."/>
            <person name="Hood L."/>
        </authorList>
    </citation>
    <scope>NUCLEOTIDE SEQUENCE [LARGE SCALE GENOMIC DNA]</scope>
    <source>
        <strain>35000HP / ATCC 700724</strain>
    </source>
</reference>
<reference key="4">
    <citation type="journal article" date="1995" name="Microbiology">
        <title>Bacterial [Cu,Zn]-superoxide dismutase: phylogenetically distinct from the eukaryotic enzyme, and not so rare after all!</title>
        <authorList>
            <person name="Kroll J.S."/>
            <person name="Langford P.R."/>
            <person name="Wilks K.E."/>
            <person name="Keil A.D."/>
        </authorList>
    </citation>
    <scope>NUCLEOTIDE SEQUENCE [GENOMIC DNA] OF 100-186</scope>
    <source>
        <strain>35000HP / ATCC 700724</strain>
    </source>
</reference>
<keyword id="KW-0002">3D-structure</keyword>
<keyword id="KW-0049">Antioxidant</keyword>
<keyword id="KW-0186">Copper</keyword>
<keyword id="KW-1015">Disulfide bond</keyword>
<keyword id="KW-0479">Metal-binding</keyword>
<keyword id="KW-0560">Oxidoreductase</keyword>
<keyword id="KW-0574">Periplasm</keyword>
<keyword id="KW-1185">Reference proteome</keyword>
<keyword id="KW-0732">Signal</keyword>
<keyword id="KW-0862">Zinc</keyword>
<protein>
    <recommendedName>
        <fullName>Superoxide dismutase [Cu-Zn]</fullName>
        <ecNumber>1.15.1.1</ecNumber>
    </recommendedName>
</protein>
<gene>
    <name type="primary">sodC</name>
    <name type="ordered locus">HD_0848</name>
</gene>
<sequence length="199" mass="21402">MKLTKVALFSLGLFGFSSMALAHGDHMHNHDTKMDTMSKDMMSMEKIVVPVQQLDPQNGNKDVGTVEITESAYGLVFTPKLHDLAHGLHGFHIHEKPSCEPKEKDGKLVAGLGAGGHWDPKQTQKHGYPWSDDAHMGDLPALFVMHDGSATTPVLAPRLKKLAEVKGHSLMIHAGGDNHSDHPAPLGGGGPRMACGVIK</sequence>
<accession>Q59452</accession>
<accession>Q59449</accession>
<accession>Q59453</accession>
<comment type="function">
    <text>Destroys radicals which are normally produced within the cells and which are toxic to biological systems. May play a role in the interactive biology of organisms with their hosts and so contribute to their capacity to cause disease.</text>
</comment>
<comment type="catalytic activity">
    <reaction>
        <text>2 superoxide + 2 H(+) = H2O2 + O2</text>
        <dbReference type="Rhea" id="RHEA:20696"/>
        <dbReference type="ChEBI" id="CHEBI:15378"/>
        <dbReference type="ChEBI" id="CHEBI:15379"/>
        <dbReference type="ChEBI" id="CHEBI:16240"/>
        <dbReference type="ChEBI" id="CHEBI:18421"/>
        <dbReference type="EC" id="1.15.1.1"/>
    </reaction>
</comment>
<comment type="cofactor">
    <cofactor evidence="1">
        <name>Cu cation</name>
        <dbReference type="ChEBI" id="CHEBI:23378"/>
    </cofactor>
    <text evidence="1">Binds 1 copper ion per subunit.</text>
</comment>
<comment type="cofactor">
    <cofactor evidence="1">
        <name>Zn(2+)</name>
        <dbReference type="ChEBI" id="CHEBI:29105"/>
    </cofactor>
    <text evidence="1">Binds 1 zinc ion per subunit.</text>
</comment>
<comment type="subunit">
    <text evidence="1">Homodimer.</text>
</comment>
<comment type="subcellular location">
    <subcellularLocation>
        <location>Periplasm</location>
    </subcellularLocation>
</comment>
<comment type="similarity">
    <text evidence="3">Belongs to the Cu-Zn superoxide dismutase family.</text>
</comment>
<proteinExistence type="evidence at protein level"/>
<evidence type="ECO:0000250" key="1"/>
<evidence type="ECO:0000255" key="2"/>
<evidence type="ECO:0000305" key="3"/>
<evidence type="ECO:0007829" key="4">
    <source>
        <dbReference type="PDB" id="1Z9N"/>
    </source>
</evidence>
<evidence type="ECO:0007829" key="5">
    <source>
        <dbReference type="PDB" id="1Z9P"/>
    </source>
</evidence>